<sequence length="361" mass="38531">MTAHLRPVLAGLPVYVPGKTVPGAIKLASNETVFGPLPSVRAAIEHATQSINRYPDNGCLAVKAALARHVSSLSAADFGPEHIAVGCGSVSLCQQLVQITASVGDEVIFGWRSFELYPPQVQVAGATAIQVPLTNHTFDLEAMLAAVTERTRLIIVCDPNNPTSTVVQPEALAEFVRSVPPHILVAIDEAYVEYLRDGTVPDSPHLVRTHSNVVVLRTFSKAYGLAGLRVGYAVGQPDVIAPLDKVYVPFTVSSLAQAAAIASVQAADELLARTDAVVAERGRVSAELRAAGFTVPPSQANFVWLPLEDRTTDFVTQAAKAHIVVRPYGADGVRVTIAAPEENDALLRFARCWITHRDGAR</sequence>
<protein>
    <recommendedName>
        <fullName evidence="1">Aromatic amino acid aminotransferase</fullName>
        <shortName evidence="1">ArAT</shortName>
        <ecNumber evidence="1">2.6.1.57</ecNumber>
    </recommendedName>
</protein>
<dbReference type="EC" id="2.6.1.57" evidence="1"/>
<dbReference type="EMBL" id="CP000325">
    <property type="protein sequence ID" value="ABL06399.1"/>
    <property type="molecule type" value="Genomic_DNA"/>
</dbReference>
<dbReference type="RefSeq" id="WP_011742000.1">
    <property type="nucleotide sequence ID" value="NC_008611.1"/>
</dbReference>
<dbReference type="SMR" id="A0PVN0"/>
<dbReference type="KEGG" id="mul:MUL_4407"/>
<dbReference type="eggNOG" id="COG0079">
    <property type="taxonomic scope" value="Bacteria"/>
</dbReference>
<dbReference type="HOGENOM" id="CLU_017584_3_3_11"/>
<dbReference type="Proteomes" id="UP000000765">
    <property type="component" value="Chromosome"/>
</dbReference>
<dbReference type="GO" id="GO:0008793">
    <property type="term" value="F:aromatic-amino-acid transaminase activity"/>
    <property type="evidence" value="ECO:0007669"/>
    <property type="project" value="UniProtKB-UniRule"/>
</dbReference>
<dbReference type="GO" id="GO:0004400">
    <property type="term" value="F:histidinol-phosphate transaminase activity"/>
    <property type="evidence" value="ECO:0007669"/>
    <property type="project" value="InterPro"/>
</dbReference>
<dbReference type="GO" id="GO:0030170">
    <property type="term" value="F:pyridoxal phosphate binding"/>
    <property type="evidence" value="ECO:0007669"/>
    <property type="project" value="UniProtKB-UniRule"/>
</dbReference>
<dbReference type="GO" id="GO:0000105">
    <property type="term" value="P:L-histidine biosynthetic process"/>
    <property type="evidence" value="ECO:0007669"/>
    <property type="project" value="InterPro"/>
</dbReference>
<dbReference type="CDD" id="cd00609">
    <property type="entry name" value="AAT_like"/>
    <property type="match status" value="1"/>
</dbReference>
<dbReference type="Gene3D" id="3.90.1150.10">
    <property type="entry name" value="Aspartate Aminotransferase, domain 1"/>
    <property type="match status" value="1"/>
</dbReference>
<dbReference type="Gene3D" id="3.40.640.10">
    <property type="entry name" value="Type I PLP-dependent aspartate aminotransferase-like (Major domain)"/>
    <property type="match status" value="1"/>
</dbReference>
<dbReference type="HAMAP" id="MF_01023">
    <property type="entry name" value="HisC_aminotrans_2"/>
    <property type="match status" value="1"/>
</dbReference>
<dbReference type="HAMAP" id="MF_01513">
    <property type="entry name" value="Phe_aminotrans_2"/>
    <property type="match status" value="1"/>
</dbReference>
<dbReference type="InterPro" id="IPR001917">
    <property type="entry name" value="Aminotrans_II_pyridoxalP_BS"/>
</dbReference>
<dbReference type="InterPro" id="IPR004839">
    <property type="entry name" value="Aminotransferase_I/II_large"/>
</dbReference>
<dbReference type="InterPro" id="IPR024892">
    <property type="entry name" value="ArAT"/>
</dbReference>
<dbReference type="InterPro" id="IPR005861">
    <property type="entry name" value="HisP_aminotrans"/>
</dbReference>
<dbReference type="InterPro" id="IPR050106">
    <property type="entry name" value="HistidinolP_aminotransfase"/>
</dbReference>
<dbReference type="InterPro" id="IPR015424">
    <property type="entry name" value="PyrdxlP-dep_Trfase"/>
</dbReference>
<dbReference type="InterPro" id="IPR015421">
    <property type="entry name" value="PyrdxlP-dep_Trfase_major"/>
</dbReference>
<dbReference type="InterPro" id="IPR015422">
    <property type="entry name" value="PyrdxlP-dep_Trfase_small"/>
</dbReference>
<dbReference type="NCBIfam" id="NF002878">
    <property type="entry name" value="PRK03321.1"/>
    <property type="match status" value="1"/>
</dbReference>
<dbReference type="PANTHER" id="PTHR43643:SF3">
    <property type="entry name" value="HISTIDINOL-PHOSPHATE AMINOTRANSFERASE"/>
    <property type="match status" value="1"/>
</dbReference>
<dbReference type="PANTHER" id="PTHR43643">
    <property type="entry name" value="HISTIDINOL-PHOSPHATE AMINOTRANSFERASE 2"/>
    <property type="match status" value="1"/>
</dbReference>
<dbReference type="Pfam" id="PF00155">
    <property type="entry name" value="Aminotran_1_2"/>
    <property type="match status" value="1"/>
</dbReference>
<dbReference type="SUPFAM" id="SSF53383">
    <property type="entry name" value="PLP-dependent transferases"/>
    <property type="match status" value="1"/>
</dbReference>
<dbReference type="PROSITE" id="PS00599">
    <property type="entry name" value="AA_TRANSFER_CLASS_2"/>
    <property type="match status" value="1"/>
</dbReference>
<gene>
    <name evidence="1" type="primary">pat</name>
    <name type="ordered locus">MUL_4407</name>
</gene>
<feature type="chain" id="PRO_1000024501" description="Aromatic amino acid aminotransferase">
    <location>
        <begin position="1"/>
        <end position="361"/>
    </location>
</feature>
<feature type="modified residue" description="N6-(pyridoxal phosphate)lysine" evidence="1">
    <location>
        <position position="221"/>
    </location>
</feature>
<proteinExistence type="inferred from homology"/>
<comment type="function">
    <text evidence="1">Aminotransferase that catalyzes the conversion of aromatic amino acids and 2-oxoglutarate into corresponding aromatic oxo acids and L-glutamate.</text>
</comment>
<comment type="catalytic activity">
    <reaction evidence="1">
        <text>an aromatic L-alpha-amino acid + 2-oxoglutarate = an aromatic oxo-acid + L-glutamate</text>
        <dbReference type="Rhea" id="RHEA:17533"/>
        <dbReference type="ChEBI" id="CHEBI:16810"/>
        <dbReference type="ChEBI" id="CHEBI:29985"/>
        <dbReference type="ChEBI" id="CHEBI:73309"/>
        <dbReference type="ChEBI" id="CHEBI:84824"/>
        <dbReference type="EC" id="2.6.1.57"/>
    </reaction>
</comment>
<comment type="cofactor">
    <cofactor evidence="1">
        <name>pyridoxal 5'-phosphate</name>
        <dbReference type="ChEBI" id="CHEBI:597326"/>
    </cofactor>
</comment>
<comment type="subunit">
    <text evidence="1">Homodimer.</text>
</comment>
<comment type="similarity">
    <text evidence="1">Belongs to the class-II pyridoxal-phosphate-dependent aminotransferase family.</text>
</comment>
<organism>
    <name type="scientific">Mycobacterium ulcerans (strain Agy99)</name>
    <dbReference type="NCBI Taxonomy" id="362242"/>
    <lineage>
        <taxon>Bacteria</taxon>
        <taxon>Bacillati</taxon>
        <taxon>Actinomycetota</taxon>
        <taxon>Actinomycetes</taxon>
        <taxon>Mycobacteriales</taxon>
        <taxon>Mycobacteriaceae</taxon>
        <taxon>Mycobacterium</taxon>
        <taxon>Mycobacterium ulcerans group</taxon>
    </lineage>
</organism>
<name>PATR_MYCUA</name>
<evidence type="ECO:0000255" key="1">
    <source>
        <dbReference type="HAMAP-Rule" id="MF_01513"/>
    </source>
</evidence>
<accession>A0PVN0</accession>
<reference key="1">
    <citation type="journal article" date="2007" name="Genome Res.">
        <title>Reductive evolution and niche adaptation inferred from the genome of Mycobacterium ulcerans, the causative agent of Buruli ulcer.</title>
        <authorList>
            <person name="Stinear T.P."/>
            <person name="Seemann T."/>
            <person name="Pidot S."/>
            <person name="Frigui W."/>
            <person name="Reysset G."/>
            <person name="Garnier T."/>
            <person name="Meurice G."/>
            <person name="Simon D."/>
            <person name="Bouchier C."/>
            <person name="Ma L."/>
            <person name="Tichit M."/>
            <person name="Porter J.L."/>
            <person name="Ryan J."/>
            <person name="Johnson P.D.R."/>
            <person name="Davies J.K."/>
            <person name="Jenkin G.A."/>
            <person name="Small P.L.C."/>
            <person name="Jones L.M."/>
            <person name="Tekaia F."/>
            <person name="Laval F."/>
            <person name="Daffe M."/>
            <person name="Parkhill J."/>
            <person name="Cole S.T."/>
        </authorList>
    </citation>
    <scope>NUCLEOTIDE SEQUENCE [LARGE SCALE GENOMIC DNA]</scope>
    <source>
        <strain>Agy99</strain>
    </source>
</reference>
<keyword id="KW-0032">Aminotransferase</keyword>
<keyword id="KW-0663">Pyridoxal phosphate</keyword>
<keyword id="KW-0808">Transferase</keyword>